<reference key="1">
    <citation type="journal article" date="1990" name="Nucleic Acids Res.">
        <title>Nucleotide sequence of the mitochondrial genome of Paramecium.</title>
        <authorList>
            <person name="Pritchard A.E."/>
            <person name="Seilhamer J.J."/>
            <person name="Mahalingam R."/>
            <person name="Sable C.L."/>
            <person name="Venuti S.E."/>
            <person name="Cummings D.J."/>
        </authorList>
    </citation>
    <scope>NUCLEOTIDE SEQUENCE [GENOMIC DNA]</scope>
    <source>
        <strain>Stock 51</strain>
    </source>
</reference>
<name>YM10_PARTE</name>
<organism>
    <name type="scientific">Paramecium tetraurelia</name>
    <dbReference type="NCBI Taxonomy" id="5888"/>
    <lineage>
        <taxon>Eukaryota</taxon>
        <taxon>Sar</taxon>
        <taxon>Alveolata</taxon>
        <taxon>Ciliophora</taxon>
        <taxon>Intramacronucleata</taxon>
        <taxon>Oligohymenophorea</taxon>
        <taxon>Peniculida</taxon>
        <taxon>Parameciidae</taxon>
        <taxon>Paramecium</taxon>
    </lineage>
</organism>
<keyword id="KW-0496">Mitochondrion</keyword>
<sequence>MSCIFFSELFPIFTFFKEKIGHYARVLARKLDRDLSLSIRNLLTLKRKNMNFLKFLNRSSPVDTRAIEMDYLSLSFFFFGGSSWSLTRITASTSSCTDSSPLGRP</sequence>
<dbReference type="EMBL" id="X15917">
    <property type="protein sequence ID" value="CAA34051.1"/>
    <property type="molecule type" value="Genomic_DNA"/>
</dbReference>
<dbReference type="PIR" id="S07742">
    <property type="entry name" value="S07742"/>
</dbReference>
<dbReference type="SMR" id="P15611"/>
<dbReference type="GO" id="GO:0005739">
    <property type="term" value="C:mitochondrion"/>
    <property type="evidence" value="ECO:0007669"/>
    <property type="project" value="UniProtKB-SubCell"/>
</dbReference>
<evidence type="ECO:0000305" key="1"/>
<geneLocation type="mitochondrion"/>
<protein>
    <recommendedName>
        <fullName>Uncharacterized mitochondrial protein ORF10</fullName>
    </recommendedName>
</protein>
<proteinExistence type="predicted"/>
<feature type="chain" id="PRO_0000196871" description="Uncharacterized mitochondrial protein ORF10">
    <location>
        <begin position="1"/>
        <end position="105"/>
    </location>
</feature>
<accession>P15611</accession>
<comment type="subcellular location">
    <subcellularLocation>
        <location evidence="1">Mitochondrion</location>
    </subcellularLocation>
</comment>